<dbReference type="EC" id="4.2.1.33" evidence="1"/>
<dbReference type="EMBL" id="CP000934">
    <property type="protein sequence ID" value="ACE84731.1"/>
    <property type="molecule type" value="Genomic_DNA"/>
</dbReference>
<dbReference type="RefSeq" id="WP_012487366.1">
    <property type="nucleotide sequence ID" value="NC_010995.1"/>
</dbReference>
<dbReference type="SMR" id="B3PFN3"/>
<dbReference type="STRING" id="498211.CJA_1745"/>
<dbReference type="KEGG" id="cja:CJA_1745"/>
<dbReference type="eggNOG" id="COG0066">
    <property type="taxonomic scope" value="Bacteria"/>
</dbReference>
<dbReference type="HOGENOM" id="CLU_081378_0_3_6"/>
<dbReference type="OrthoDB" id="9777465at2"/>
<dbReference type="UniPathway" id="UPA00048">
    <property type="reaction ID" value="UER00071"/>
</dbReference>
<dbReference type="Proteomes" id="UP000001036">
    <property type="component" value="Chromosome"/>
</dbReference>
<dbReference type="GO" id="GO:0009316">
    <property type="term" value="C:3-isopropylmalate dehydratase complex"/>
    <property type="evidence" value="ECO:0007669"/>
    <property type="project" value="InterPro"/>
</dbReference>
<dbReference type="GO" id="GO:0003861">
    <property type="term" value="F:3-isopropylmalate dehydratase activity"/>
    <property type="evidence" value="ECO:0007669"/>
    <property type="project" value="UniProtKB-UniRule"/>
</dbReference>
<dbReference type="GO" id="GO:0009098">
    <property type="term" value="P:L-leucine biosynthetic process"/>
    <property type="evidence" value="ECO:0007669"/>
    <property type="project" value="UniProtKB-UniRule"/>
</dbReference>
<dbReference type="CDD" id="cd01577">
    <property type="entry name" value="IPMI_Swivel"/>
    <property type="match status" value="1"/>
</dbReference>
<dbReference type="FunFam" id="3.20.19.10:FF:000003">
    <property type="entry name" value="3-isopropylmalate dehydratase small subunit"/>
    <property type="match status" value="1"/>
</dbReference>
<dbReference type="Gene3D" id="3.20.19.10">
    <property type="entry name" value="Aconitase, domain 4"/>
    <property type="match status" value="1"/>
</dbReference>
<dbReference type="HAMAP" id="MF_01031">
    <property type="entry name" value="LeuD_type1"/>
    <property type="match status" value="1"/>
</dbReference>
<dbReference type="InterPro" id="IPR004431">
    <property type="entry name" value="3-IsopropMal_deHydase_ssu"/>
</dbReference>
<dbReference type="InterPro" id="IPR015928">
    <property type="entry name" value="Aconitase/3IPM_dehydase_swvl"/>
</dbReference>
<dbReference type="InterPro" id="IPR000573">
    <property type="entry name" value="AconitaseA/IPMdHydase_ssu_swvl"/>
</dbReference>
<dbReference type="InterPro" id="IPR033940">
    <property type="entry name" value="IPMI_Swivel"/>
</dbReference>
<dbReference type="InterPro" id="IPR050075">
    <property type="entry name" value="LeuD"/>
</dbReference>
<dbReference type="NCBIfam" id="TIGR00171">
    <property type="entry name" value="leuD"/>
    <property type="match status" value="1"/>
</dbReference>
<dbReference type="NCBIfam" id="NF002458">
    <property type="entry name" value="PRK01641.1"/>
    <property type="match status" value="1"/>
</dbReference>
<dbReference type="PANTHER" id="PTHR43345:SF5">
    <property type="entry name" value="3-ISOPROPYLMALATE DEHYDRATASE SMALL SUBUNIT"/>
    <property type="match status" value="1"/>
</dbReference>
<dbReference type="PANTHER" id="PTHR43345">
    <property type="entry name" value="3-ISOPROPYLMALATE DEHYDRATASE SMALL SUBUNIT 2-RELATED-RELATED"/>
    <property type="match status" value="1"/>
</dbReference>
<dbReference type="Pfam" id="PF00694">
    <property type="entry name" value="Aconitase_C"/>
    <property type="match status" value="1"/>
</dbReference>
<dbReference type="SUPFAM" id="SSF52016">
    <property type="entry name" value="LeuD/IlvD-like"/>
    <property type="match status" value="1"/>
</dbReference>
<proteinExistence type="inferred from homology"/>
<protein>
    <recommendedName>
        <fullName evidence="1">3-isopropylmalate dehydratase small subunit</fullName>
        <ecNumber evidence="1">4.2.1.33</ecNumber>
    </recommendedName>
    <alternativeName>
        <fullName evidence="1">Alpha-IPM isomerase</fullName>
        <shortName evidence="1">IPMI</shortName>
    </alternativeName>
    <alternativeName>
        <fullName evidence="1">Isopropylmalate isomerase</fullName>
    </alternativeName>
</protein>
<feature type="chain" id="PRO_1000135798" description="3-isopropylmalate dehydratase small subunit">
    <location>
        <begin position="1"/>
        <end position="215"/>
    </location>
</feature>
<keyword id="KW-0028">Amino-acid biosynthesis</keyword>
<keyword id="KW-0100">Branched-chain amino acid biosynthesis</keyword>
<keyword id="KW-0432">Leucine biosynthesis</keyword>
<keyword id="KW-0456">Lyase</keyword>
<keyword id="KW-1185">Reference proteome</keyword>
<accession>B3PFN3</accession>
<name>LEUD_CELJU</name>
<evidence type="ECO:0000255" key="1">
    <source>
        <dbReference type="HAMAP-Rule" id="MF_01031"/>
    </source>
</evidence>
<gene>
    <name evidence="1" type="primary">leuD</name>
    <name type="ordered locus">CJA_1745</name>
</gene>
<organism>
    <name type="scientific">Cellvibrio japonicus (strain Ueda107)</name>
    <name type="common">Pseudomonas fluorescens subsp. cellulosa</name>
    <dbReference type="NCBI Taxonomy" id="498211"/>
    <lineage>
        <taxon>Bacteria</taxon>
        <taxon>Pseudomonadati</taxon>
        <taxon>Pseudomonadota</taxon>
        <taxon>Gammaproteobacteria</taxon>
        <taxon>Cellvibrionales</taxon>
        <taxon>Cellvibrionaceae</taxon>
        <taxon>Cellvibrio</taxon>
    </lineage>
</organism>
<comment type="function">
    <text evidence="1">Catalyzes the isomerization between 2-isopropylmalate and 3-isopropylmalate, via the formation of 2-isopropylmaleate.</text>
</comment>
<comment type="catalytic activity">
    <reaction evidence="1">
        <text>(2R,3S)-3-isopropylmalate = (2S)-2-isopropylmalate</text>
        <dbReference type="Rhea" id="RHEA:32287"/>
        <dbReference type="ChEBI" id="CHEBI:1178"/>
        <dbReference type="ChEBI" id="CHEBI:35121"/>
        <dbReference type="EC" id="4.2.1.33"/>
    </reaction>
</comment>
<comment type="pathway">
    <text evidence="1">Amino-acid biosynthesis; L-leucine biosynthesis; L-leucine from 3-methyl-2-oxobutanoate: step 2/4.</text>
</comment>
<comment type="subunit">
    <text evidence="1">Heterodimer of LeuC and LeuD.</text>
</comment>
<comment type="similarity">
    <text evidence="1">Belongs to the LeuD family. LeuD type 1 subfamily.</text>
</comment>
<sequence length="215" mass="24513">MKSFTVLDGLAAPMDRANVDTDMIIPKQFLKSIKRTGFGKNLFDELRYLDEGKPDQSCEGRPLNTEFPLNFPRYQDASVLLARENFGCGSSREHAPWALDDYGFRSVIAPSFADIFFNNCFKNGLLPIMLDEKIVDQLFREMYASEGYRLNIDLAEQTVTTPSGESFGFEIDAFRKHCLLNGLDDIGLTLEKADKIRAYETRRRAEAPWLFDVVK</sequence>
<reference key="1">
    <citation type="journal article" date="2008" name="J. Bacteriol.">
        <title>Insights into plant cell wall degradation from the genome sequence of the soil bacterium Cellvibrio japonicus.</title>
        <authorList>
            <person name="DeBoy R.T."/>
            <person name="Mongodin E.F."/>
            <person name="Fouts D.E."/>
            <person name="Tailford L.E."/>
            <person name="Khouri H."/>
            <person name="Emerson J.B."/>
            <person name="Mohamoud Y."/>
            <person name="Watkins K."/>
            <person name="Henrissat B."/>
            <person name="Gilbert H.J."/>
            <person name="Nelson K.E."/>
        </authorList>
    </citation>
    <scope>NUCLEOTIDE SEQUENCE [LARGE SCALE GENOMIC DNA]</scope>
    <source>
        <strain>Ueda107</strain>
    </source>
</reference>